<accession>P32141</accession>
<accession>Q2M8H8</accession>
<proteinExistence type="evidence at protein level"/>
<comment type="function">
    <text evidence="1 2">Cleaves 6-deoxy-6-sulfo-D-fructose 1-phosphate (SFP) to form dihydroxyacetone phosphate (DHAP) and 3-sulfolactaldehyde (SLA).</text>
</comment>
<comment type="catalytic activity">
    <reaction evidence="1 2">
        <text>6-deoxy-6-sulfo-D-fructose 1-phosphate = (2S)-3-sulfolactaldehyde + dihydroxyacetone phosphate</text>
        <dbReference type="Rhea" id="RHEA:40515"/>
        <dbReference type="ChEBI" id="CHEBI:57642"/>
        <dbReference type="ChEBI" id="CHEBI:77134"/>
        <dbReference type="ChEBI" id="CHEBI:90109"/>
        <dbReference type="EC" id="4.1.2.57"/>
    </reaction>
    <physiologicalReaction direction="left-to-right" evidence="1 2">
        <dbReference type="Rhea" id="RHEA:40516"/>
    </physiologicalReaction>
</comment>
<comment type="subunit">
    <text evidence="1 3">Homotetramer.</text>
</comment>
<comment type="induction">
    <text evidence="2">Induced during growth with sulfoquinovose.</text>
</comment>
<comment type="disruption phenotype">
    <text evidence="2">Mutant fails to grow on sulfoquinovose as a sole carbon source.</text>
</comment>
<comment type="similarity">
    <text evidence="1 5">Belongs to the aldolase LacD family.</text>
</comment>
<dbReference type="EC" id="4.1.2.57" evidence="1 2"/>
<dbReference type="EMBL" id="L19201">
    <property type="protein sequence ID" value="AAB03014.1"/>
    <property type="molecule type" value="Genomic_DNA"/>
</dbReference>
<dbReference type="EMBL" id="U00096">
    <property type="protein sequence ID" value="AAD13443.1"/>
    <property type="molecule type" value="Genomic_DNA"/>
</dbReference>
<dbReference type="EMBL" id="AP009048">
    <property type="protein sequence ID" value="BAE77428.1"/>
    <property type="molecule type" value="Genomic_DNA"/>
</dbReference>
<dbReference type="PIR" id="S40825">
    <property type="entry name" value="S40825"/>
</dbReference>
<dbReference type="RefSeq" id="NP_418317.1">
    <property type="nucleotide sequence ID" value="NC_000913.3"/>
</dbReference>
<dbReference type="RefSeq" id="WP_001046453.1">
    <property type="nucleotide sequence ID" value="NZ_STEB01000017.1"/>
</dbReference>
<dbReference type="PDB" id="7AG1">
    <property type="method" value="X-ray"/>
    <property type="resolution" value="2.00 A"/>
    <property type="chains" value="X/Z=1-292"/>
</dbReference>
<dbReference type="PDBsum" id="7AG1"/>
<dbReference type="SMR" id="P32141"/>
<dbReference type="BioGRID" id="4262639">
    <property type="interactions" value="14"/>
</dbReference>
<dbReference type="FunCoup" id="P32141">
    <property type="interactions" value="25"/>
</dbReference>
<dbReference type="IntAct" id="P32141">
    <property type="interactions" value="5"/>
</dbReference>
<dbReference type="STRING" id="511145.b3881"/>
<dbReference type="jPOST" id="P32141"/>
<dbReference type="PaxDb" id="511145-b3881"/>
<dbReference type="EnsemblBacteria" id="AAD13443">
    <property type="protein sequence ID" value="AAD13443"/>
    <property type="gene ID" value="b3881"/>
</dbReference>
<dbReference type="GeneID" id="75204552"/>
<dbReference type="GeneID" id="948373"/>
<dbReference type="KEGG" id="ecj:JW3852"/>
<dbReference type="KEGG" id="eco:b3881"/>
<dbReference type="KEGG" id="ecoc:C3026_20980"/>
<dbReference type="PATRIC" id="fig|1411691.4.peg.2830"/>
<dbReference type="EchoBASE" id="EB1792"/>
<dbReference type="eggNOG" id="COG3684">
    <property type="taxonomic scope" value="Bacteria"/>
</dbReference>
<dbReference type="HOGENOM" id="CLU_083300_0_0_6"/>
<dbReference type="InParanoid" id="P32141"/>
<dbReference type="OMA" id="CIKILLY"/>
<dbReference type="OrthoDB" id="9802970at2"/>
<dbReference type="PhylomeDB" id="P32141"/>
<dbReference type="BioCyc" id="EcoCyc:EG11846-MONOMER"/>
<dbReference type="BioCyc" id="MetaCyc:EG11846-MONOMER"/>
<dbReference type="PRO" id="PR:P32141"/>
<dbReference type="Proteomes" id="UP000000625">
    <property type="component" value="Chromosome"/>
</dbReference>
<dbReference type="GO" id="GO:0061595">
    <property type="term" value="F:6-deoxy-6-sulfofructose-1-phosphate aldolase activity"/>
    <property type="evidence" value="ECO:0000314"/>
    <property type="project" value="EcoCyc"/>
</dbReference>
<dbReference type="GO" id="GO:1902777">
    <property type="term" value="P:6-sulfoquinovose(1-) catabolic process"/>
    <property type="evidence" value="ECO:0000315"/>
    <property type="project" value="EcoCyc"/>
</dbReference>
<dbReference type="GO" id="GO:0061720">
    <property type="term" value="P:6-sulfoquinovose(1-) catabolic process to glycerone phosphate and 3-sulfolactaldehyde"/>
    <property type="evidence" value="ECO:0000315"/>
    <property type="project" value="EcoCyc"/>
</dbReference>
<dbReference type="FunFam" id="3.20.20.70:FF:000089">
    <property type="entry name" value="Sulfofructosephosphate aldolase"/>
    <property type="match status" value="1"/>
</dbReference>
<dbReference type="Gene3D" id="3.20.20.70">
    <property type="entry name" value="Aldolase class I"/>
    <property type="match status" value="1"/>
</dbReference>
<dbReference type="HAMAP" id="MF_01912">
    <property type="entry name" value="SFP_aldolase"/>
    <property type="match status" value="1"/>
</dbReference>
<dbReference type="InterPro" id="IPR013785">
    <property type="entry name" value="Aldolase_TIM"/>
</dbReference>
<dbReference type="InterPro" id="IPR002915">
    <property type="entry name" value="DeoC/FbaB/LacD_aldolase"/>
</dbReference>
<dbReference type="InterPro" id="IPR050552">
    <property type="entry name" value="LacD_aldolase"/>
</dbReference>
<dbReference type="InterPro" id="IPR017291">
    <property type="entry name" value="SFP_aldolase_YihT"/>
</dbReference>
<dbReference type="PANTHER" id="PTHR39340">
    <property type="entry name" value="SULFOFRUCTOSEPHOSPHATE ALDOLASE"/>
    <property type="match status" value="1"/>
</dbReference>
<dbReference type="PANTHER" id="PTHR39340:SF1">
    <property type="entry name" value="SULFOFRUCTOSEPHOSPHATE ALDOLASE"/>
    <property type="match status" value="1"/>
</dbReference>
<dbReference type="Pfam" id="PF01791">
    <property type="entry name" value="DeoC"/>
    <property type="match status" value="1"/>
</dbReference>
<dbReference type="PIRSF" id="PIRSF037840">
    <property type="entry name" value="Aldolase_YihT"/>
    <property type="match status" value="1"/>
</dbReference>
<dbReference type="SMART" id="SM01133">
    <property type="entry name" value="DeoC"/>
    <property type="match status" value="1"/>
</dbReference>
<dbReference type="SUPFAM" id="SSF51569">
    <property type="entry name" value="Aldolase"/>
    <property type="match status" value="1"/>
</dbReference>
<feature type="chain" id="PRO_0000203969" description="Sulfofructosephosphate aldolase">
    <location>
        <begin position="1"/>
        <end position="292"/>
    </location>
</feature>
<feature type="active site" description="Schiff-base intermediate with substrate" evidence="1">
    <location>
        <position position="193"/>
    </location>
</feature>
<feature type="helix" evidence="7">
    <location>
        <begin position="6"/>
        <end position="8"/>
    </location>
</feature>
<feature type="strand" evidence="7">
    <location>
        <begin position="16"/>
        <end position="20"/>
    </location>
</feature>
<feature type="helix" evidence="7">
    <location>
        <begin position="25"/>
        <end position="33"/>
    </location>
</feature>
<feature type="helix" evidence="7">
    <location>
        <begin position="42"/>
        <end position="56"/>
    </location>
</feature>
<feature type="helix" evidence="7">
    <location>
        <begin position="57"/>
        <end position="59"/>
    </location>
</feature>
<feature type="strand" evidence="7">
    <location>
        <begin position="61"/>
        <end position="65"/>
    </location>
</feature>
<feature type="turn" evidence="7">
    <location>
        <begin position="67"/>
        <end position="70"/>
    </location>
</feature>
<feature type="helix" evidence="7">
    <location>
        <begin position="71"/>
        <end position="76"/>
    </location>
</feature>
<feature type="strand" evidence="7">
    <location>
        <begin position="84"/>
        <end position="89"/>
    </location>
</feature>
<feature type="strand" evidence="7">
    <location>
        <begin position="91"/>
        <end position="96"/>
    </location>
</feature>
<feature type="strand" evidence="7">
    <location>
        <begin position="99"/>
        <end position="106"/>
    </location>
</feature>
<feature type="helix" evidence="7">
    <location>
        <begin position="112"/>
        <end position="117"/>
    </location>
</feature>
<feature type="strand" evidence="7">
    <location>
        <begin position="122"/>
        <end position="129"/>
    </location>
</feature>
<feature type="helix" evidence="7">
    <location>
        <begin position="135"/>
        <end position="151"/>
    </location>
</feature>
<feature type="strand" evidence="7">
    <location>
        <begin position="155"/>
        <end position="162"/>
    </location>
</feature>
<feature type="helix" evidence="7">
    <location>
        <begin position="173"/>
        <end position="184"/>
    </location>
</feature>
<feature type="strand" evidence="7">
    <location>
        <begin position="190"/>
        <end position="195"/>
    </location>
</feature>
<feature type="helix" evidence="7">
    <location>
        <begin position="197"/>
        <end position="200"/>
    </location>
</feature>
<feature type="helix" evidence="7">
    <location>
        <begin position="204"/>
        <end position="215"/>
    </location>
</feature>
<feature type="strand" evidence="7">
    <location>
        <begin position="222"/>
        <end position="225"/>
    </location>
</feature>
<feature type="turn" evidence="7">
    <location>
        <begin position="231"/>
        <end position="233"/>
    </location>
</feature>
<feature type="helix" evidence="7">
    <location>
        <begin position="234"/>
        <end position="243"/>
    </location>
</feature>
<feature type="strand" evidence="7">
    <location>
        <begin position="248"/>
        <end position="252"/>
    </location>
</feature>
<feature type="helix" evidence="7">
    <location>
        <begin position="253"/>
        <end position="256"/>
    </location>
</feature>
<feature type="helix" evidence="7">
    <location>
        <begin position="257"/>
        <end position="259"/>
    </location>
</feature>
<feature type="helix" evidence="7">
    <location>
        <begin position="265"/>
        <end position="271"/>
    </location>
</feature>
<feature type="helix" evidence="7">
    <location>
        <begin position="273"/>
        <end position="292"/>
    </location>
</feature>
<protein>
    <recommendedName>
        <fullName evidence="1 4">Sulfofructosephosphate aldolase</fullName>
        <shortName evidence="1 4">SFP aldolase</shortName>
        <ecNumber evidence="1 2">4.1.2.57</ecNumber>
    </recommendedName>
</protein>
<organism>
    <name type="scientific">Escherichia coli (strain K12)</name>
    <dbReference type="NCBI Taxonomy" id="83333"/>
    <lineage>
        <taxon>Bacteria</taxon>
        <taxon>Pseudomonadati</taxon>
        <taxon>Pseudomonadota</taxon>
        <taxon>Gammaproteobacteria</taxon>
        <taxon>Enterobacterales</taxon>
        <taxon>Enterobacteriaceae</taxon>
        <taxon>Escherichia</taxon>
    </lineage>
</organism>
<reference key="1">
    <citation type="journal article" date="1993" name="Nucleic Acids Res.">
        <title>Analysis of the Escherichia coli genome. III. DNA sequence of the region from 87.2 to 89.2 minutes.</title>
        <authorList>
            <person name="Plunkett G. III"/>
            <person name="Burland V."/>
            <person name="Daniels D.L."/>
            <person name="Blattner F.R."/>
        </authorList>
    </citation>
    <scope>NUCLEOTIDE SEQUENCE [LARGE SCALE GENOMIC DNA]</scope>
    <source>
        <strain>K12 / MG1655 / ATCC 47076</strain>
    </source>
</reference>
<reference key="2">
    <citation type="journal article" date="1997" name="Science">
        <title>The complete genome sequence of Escherichia coli K-12.</title>
        <authorList>
            <person name="Blattner F.R."/>
            <person name="Plunkett G. III"/>
            <person name="Bloch C.A."/>
            <person name="Perna N.T."/>
            <person name="Burland V."/>
            <person name="Riley M."/>
            <person name="Collado-Vides J."/>
            <person name="Glasner J.D."/>
            <person name="Rode C.K."/>
            <person name="Mayhew G.F."/>
            <person name="Gregor J."/>
            <person name="Davis N.W."/>
            <person name="Kirkpatrick H.A."/>
            <person name="Goeden M.A."/>
            <person name="Rose D.J."/>
            <person name="Mau B."/>
            <person name="Shao Y."/>
        </authorList>
    </citation>
    <scope>NUCLEOTIDE SEQUENCE [LARGE SCALE GENOMIC DNA]</scope>
    <source>
        <strain>K12 / MG1655 / ATCC 47076</strain>
    </source>
</reference>
<reference key="3">
    <citation type="journal article" date="2006" name="Mol. Syst. Biol.">
        <title>Highly accurate genome sequences of Escherichia coli K-12 strains MG1655 and W3110.</title>
        <authorList>
            <person name="Hayashi K."/>
            <person name="Morooka N."/>
            <person name="Yamamoto Y."/>
            <person name="Fujita K."/>
            <person name="Isono K."/>
            <person name="Choi S."/>
            <person name="Ohtsubo E."/>
            <person name="Baba T."/>
            <person name="Wanner B.L."/>
            <person name="Mori H."/>
            <person name="Horiuchi T."/>
        </authorList>
    </citation>
    <scope>NUCLEOTIDE SEQUENCE [LARGE SCALE GENOMIC DNA]</scope>
    <source>
        <strain>K12 / W3110 / ATCC 27325 / DSM 5911</strain>
    </source>
</reference>
<reference key="4">
    <citation type="journal article" date="2014" name="Nature">
        <title>Sulphoglycolysis in Escherichia coli K-12 closes a gap in the biogeochemical sulphur cycle.</title>
        <authorList>
            <person name="Denger K."/>
            <person name="Weiss M."/>
            <person name="Felux A.K."/>
            <person name="Schneider A."/>
            <person name="Mayer C."/>
            <person name="Spiteller D."/>
            <person name="Huhn T."/>
            <person name="Cook A.M."/>
            <person name="Schleheck D."/>
        </authorList>
    </citation>
    <scope>FUNCTION</scope>
    <scope>CATALYTIC ACTIVITY</scope>
    <scope>INDUCTION</scope>
    <scope>DISRUPTION PHENOTYPE</scope>
    <scope>IDENTIFICATION BY MASS SPECTROMETRY</scope>
    <source>
        <strain>K12</strain>
    </source>
</reference>
<reference evidence="6" key="5">
    <citation type="journal article" date="2021" name="ACS Cent. Sci.">
        <title>Molecular Basis of Sulfosugar Selectivity in Sulfoglycolysis.</title>
        <authorList>
            <person name="Sharma M."/>
            <person name="Abayakoon P."/>
            <person name="Epa R."/>
            <person name="Jin Y."/>
            <person name="Lingford J.P."/>
            <person name="Shimada T."/>
            <person name="Nakano M."/>
            <person name="Mui J.W."/>
            <person name="Ishihama A."/>
            <person name="Goddard-Borger E.D."/>
            <person name="Davies G.J."/>
            <person name="Williams S.J."/>
        </authorList>
    </citation>
    <scope>X-RAY CRYSTALLOGRAPHY (2.00 ANGSTROMS)</scope>
    <scope>SUBUNIT</scope>
</reference>
<evidence type="ECO:0000255" key="1">
    <source>
        <dbReference type="HAMAP-Rule" id="MF_01912"/>
    </source>
</evidence>
<evidence type="ECO:0000269" key="2">
    <source>
    </source>
</evidence>
<evidence type="ECO:0000269" key="3">
    <source>
    </source>
</evidence>
<evidence type="ECO:0000303" key="4">
    <source>
    </source>
</evidence>
<evidence type="ECO:0000305" key="5"/>
<evidence type="ECO:0007744" key="6">
    <source>
        <dbReference type="PDB" id="7AG1"/>
    </source>
</evidence>
<evidence type="ECO:0007829" key="7">
    <source>
        <dbReference type="PDB" id="7AG1"/>
    </source>
</evidence>
<keyword id="KW-0002">3D-structure</keyword>
<keyword id="KW-0119">Carbohydrate metabolism</keyword>
<keyword id="KW-0456">Lyase</keyword>
<keyword id="KW-1185">Reference proteome</keyword>
<keyword id="KW-0704">Schiff base</keyword>
<name>SQUT_ECOLI</name>
<gene>
    <name type="primary">yihT</name>
    <name type="ordered locus">b3881</name>
    <name type="ordered locus">JW3852</name>
</gene>
<sequence length="292" mass="31983">MNKYTINDITRASGGFAMLAVDQREAMRMMFAAAGAPAPVADSVLTDFKVNAAKALSPYASAILVDQQFCYRQVVEQNAIAKSCAMIVAADEFIPGNGIPVDSVVIDRKINPLQIKQDGGKALKLLVLWRSDEDAQQRLDMVKEFNELCHSHGLVSIIEPVVRPPRRGDKFDREQAIIDAAKELGDSGADLYKVEMPLYGKGPQQELLCASQRLNDHINMPWVILSSGVDEKLFPRAVRVAMTAGASGFLAGRAVWASVVGLPDNELMLRDVCAPKLQQLGDIVDEMMAKRR</sequence>